<gene>
    <name evidence="1" type="primary">hisE</name>
    <name type="ordered locus">BceJ2315_03220</name>
    <name type="ORF">BCAL0320</name>
</gene>
<protein>
    <recommendedName>
        <fullName evidence="1">Phosphoribosyl-ATP pyrophosphatase</fullName>
        <shortName evidence="1">PRA-PH</shortName>
        <ecNumber evidence="1">3.6.1.31</ecNumber>
    </recommendedName>
</protein>
<evidence type="ECO:0000255" key="1">
    <source>
        <dbReference type="HAMAP-Rule" id="MF_01020"/>
    </source>
</evidence>
<dbReference type="EC" id="3.6.1.31" evidence="1"/>
<dbReference type="EMBL" id="AM747720">
    <property type="protein sequence ID" value="CAR50630.1"/>
    <property type="molecule type" value="Genomic_DNA"/>
</dbReference>
<dbReference type="RefSeq" id="WP_006485344.1">
    <property type="nucleotide sequence ID" value="NC_011000.1"/>
</dbReference>
<dbReference type="SMR" id="B4E643"/>
<dbReference type="KEGG" id="bcj:BCAL0320"/>
<dbReference type="eggNOG" id="COG0140">
    <property type="taxonomic scope" value="Bacteria"/>
</dbReference>
<dbReference type="HOGENOM" id="CLU_123337_1_2_4"/>
<dbReference type="BioCyc" id="BCEN216591:G1G1V-365-MONOMER"/>
<dbReference type="UniPathway" id="UPA00031">
    <property type="reaction ID" value="UER00007"/>
</dbReference>
<dbReference type="Proteomes" id="UP000001035">
    <property type="component" value="Chromosome 1"/>
</dbReference>
<dbReference type="GO" id="GO:0005737">
    <property type="term" value="C:cytoplasm"/>
    <property type="evidence" value="ECO:0007669"/>
    <property type="project" value="UniProtKB-SubCell"/>
</dbReference>
<dbReference type="GO" id="GO:0005524">
    <property type="term" value="F:ATP binding"/>
    <property type="evidence" value="ECO:0007669"/>
    <property type="project" value="UniProtKB-KW"/>
</dbReference>
<dbReference type="GO" id="GO:0004636">
    <property type="term" value="F:phosphoribosyl-ATP diphosphatase activity"/>
    <property type="evidence" value="ECO:0007669"/>
    <property type="project" value="UniProtKB-UniRule"/>
</dbReference>
<dbReference type="GO" id="GO:0000105">
    <property type="term" value="P:L-histidine biosynthetic process"/>
    <property type="evidence" value="ECO:0007669"/>
    <property type="project" value="UniProtKB-UniRule"/>
</dbReference>
<dbReference type="CDD" id="cd11534">
    <property type="entry name" value="NTP-PPase_HisIE_like"/>
    <property type="match status" value="1"/>
</dbReference>
<dbReference type="Gene3D" id="1.10.287.1080">
    <property type="entry name" value="MazG-like"/>
    <property type="match status" value="1"/>
</dbReference>
<dbReference type="HAMAP" id="MF_01020">
    <property type="entry name" value="HisE"/>
    <property type="match status" value="1"/>
</dbReference>
<dbReference type="InterPro" id="IPR008179">
    <property type="entry name" value="HisE"/>
</dbReference>
<dbReference type="InterPro" id="IPR021130">
    <property type="entry name" value="PRib-ATP_PPHydrolase-like"/>
</dbReference>
<dbReference type="NCBIfam" id="TIGR03188">
    <property type="entry name" value="histidine_hisI"/>
    <property type="match status" value="1"/>
</dbReference>
<dbReference type="NCBIfam" id="NF001611">
    <property type="entry name" value="PRK00400.1-3"/>
    <property type="match status" value="1"/>
</dbReference>
<dbReference type="PANTHER" id="PTHR42945">
    <property type="entry name" value="HISTIDINE BIOSYNTHESIS BIFUNCTIONAL PROTEIN"/>
    <property type="match status" value="1"/>
</dbReference>
<dbReference type="PANTHER" id="PTHR42945:SF9">
    <property type="entry name" value="HISTIDINE BIOSYNTHESIS BIFUNCTIONAL PROTEIN HISIE"/>
    <property type="match status" value="1"/>
</dbReference>
<dbReference type="Pfam" id="PF01503">
    <property type="entry name" value="PRA-PH"/>
    <property type="match status" value="1"/>
</dbReference>
<dbReference type="SUPFAM" id="SSF101386">
    <property type="entry name" value="all-alpha NTP pyrophosphatases"/>
    <property type="match status" value="1"/>
</dbReference>
<name>HIS2_BURCJ</name>
<accession>B4E643</accession>
<keyword id="KW-0028">Amino-acid biosynthesis</keyword>
<keyword id="KW-0067">ATP-binding</keyword>
<keyword id="KW-0963">Cytoplasm</keyword>
<keyword id="KW-0368">Histidine biosynthesis</keyword>
<keyword id="KW-0378">Hydrolase</keyword>
<keyword id="KW-0547">Nucleotide-binding</keyword>
<reference key="1">
    <citation type="journal article" date="2009" name="J. Bacteriol.">
        <title>The genome of Burkholderia cenocepacia J2315, an epidemic pathogen of cystic fibrosis patients.</title>
        <authorList>
            <person name="Holden M.T."/>
            <person name="Seth-Smith H.M."/>
            <person name="Crossman L.C."/>
            <person name="Sebaihia M."/>
            <person name="Bentley S.D."/>
            <person name="Cerdeno-Tarraga A.M."/>
            <person name="Thomson N.R."/>
            <person name="Bason N."/>
            <person name="Quail M.A."/>
            <person name="Sharp S."/>
            <person name="Cherevach I."/>
            <person name="Churcher C."/>
            <person name="Goodhead I."/>
            <person name="Hauser H."/>
            <person name="Holroyd N."/>
            <person name="Mungall K."/>
            <person name="Scott P."/>
            <person name="Walker D."/>
            <person name="White B."/>
            <person name="Rose H."/>
            <person name="Iversen P."/>
            <person name="Mil-Homens D."/>
            <person name="Rocha E.P."/>
            <person name="Fialho A.M."/>
            <person name="Baldwin A."/>
            <person name="Dowson C."/>
            <person name="Barrell B.G."/>
            <person name="Govan J.R."/>
            <person name="Vandamme P."/>
            <person name="Hart C.A."/>
            <person name="Mahenthiralingam E."/>
            <person name="Parkhill J."/>
        </authorList>
    </citation>
    <scope>NUCLEOTIDE SEQUENCE [LARGE SCALE GENOMIC DNA]</scope>
    <source>
        <strain>ATCC BAA-245 / DSM 16553 / LMG 16656 / NCTC 13227 / J2315 / CF5610</strain>
    </source>
</reference>
<proteinExistence type="inferred from homology"/>
<feature type="chain" id="PRO_1000135306" description="Phosphoribosyl-ATP pyrophosphatase">
    <location>
        <begin position="1"/>
        <end position="121"/>
    </location>
</feature>
<organism>
    <name type="scientific">Burkholderia cenocepacia (strain ATCC BAA-245 / DSM 16553 / LMG 16656 / NCTC 13227 / J2315 / CF5610)</name>
    <name type="common">Burkholderia cepacia (strain J2315)</name>
    <dbReference type="NCBI Taxonomy" id="216591"/>
    <lineage>
        <taxon>Bacteria</taxon>
        <taxon>Pseudomonadati</taxon>
        <taxon>Pseudomonadota</taxon>
        <taxon>Betaproteobacteria</taxon>
        <taxon>Burkholderiales</taxon>
        <taxon>Burkholderiaceae</taxon>
        <taxon>Burkholderia</taxon>
        <taxon>Burkholderia cepacia complex</taxon>
    </lineage>
</organism>
<comment type="catalytic activity">
    <reaction evidence="1">
        <text>1-(5-phospho-beta-D-ribosyl)-ATP + H2O = 1-(5-phospho-beta-D-ribosyl)-5'-AMP + diphosphate + H(+)</text>
        <dbReference type="Rhea" id="RHEA:22828"/>
        <dbReference type="ChEBI" id="CHEBI:15377"/>
        <dbReference type="ChEBI" id="CHEBI:15378"/>
        <dbReference type="ChEBI" id="CHEBI:33019"/>
        <dbReference type="ChEBI" id="CHEBI:59457"/>
        <dbReference type="ChEBI" id="CHEBI:73183"/>
        <dbReference type="EC" id="3.6.1.31"/>
    </reaction>
</comment>
<comment type="pathway">
    <text evidence="1">Amino-acid biosynthesis; L-histidine biosynthesis; L-histidine from 5-phospho-alpha-D-ribose 1-diphosphate: step 2/9.</text>
</comment>
<comment type="subcellular location">
    <subcellularLocation>
        <location evidence="1">Cytoplasm</location>
    </subcellularLocation>
</comment>
<comment type="similarity">
    <text evidence="1">Belongs to the PRA-PH family.</text>
</comment>
<sequence length="121" mass="13288">MTQSTEDTLLRLAAVIDSRKGGDPDQSYVSRLFHKGDDAVLKKIGEEATEVVLAAKDVRQGGAPTALVGEVADLWFHCLVMLSHFDLSPADVIAELERREGLSGIEEKALRKRREREENGG</sequence>